<gene>
    <name type="ordered locus">HPSH_06415</name>
</gene>
<accession>B2UV03</accession>
<sequence length="190" mass="21319">MELILGSQSSARANLLKEHGIEFEQKALYFDEESLKTTDPREFVYLACKGKLEKAKELLANNRTIVVADSVVSVGNRMQRKAKNRQEAFEFLKRQNGHEIEVLTCSALISPALEWLDLSVFRARLKAFDPSEMEKYLESGLWQESAGCVRLEDFHKPYIKSLSENLSVGLGLNVEGLLGVLKLGAKLSSL</sequence>
<evidence type="ECO:0000255" key="1">
    <source>
        <dbReference type="HAMAP-Rule" id="MF_00528"/>
    </source>
</evidence>
<protein>
    <recommendedName>
        <fullName evidence="1">Nucleoside triphosphate pyrophosphatase</fullName>
        <ecNumber evidence="1">3.6.1.9</ecNumber>
    </recommendedName>
    <alternativeName>
        <fullName evidence="1">Nucleotide pyrophosphatase</fullName>
        <shortName evidence="1">Nucleotide PPase</shortName>
    </alternativeName>
</protein>
<comment type="function">
    <text evidence="1">Nucleoside triphosphate pyrophosphatase. May have a dual role in cell division arrest and in preventing the incorporation of modified nucleotides into cellular nucleic acids.</text>
</comment>
<comment type="catalytic activity">
    <reaction evidence="1">
        <text>a ribonucleoside 5'-triphosphate + H2O = a ribonucleoside 5'-phosphate + diphosphate + H(+)</text>
        <dbReference type="Rhea" id="RHEA:23996"/>
        <dbReference type="ChEBI" id="CHEBI:15377"/>
        <dbReference type="ChEBI" id="CHEBI:15378"/>
        <dbReference type="ChEBI" id="CHEBI:33019"/>
        <dbReference type="ChEBI" id="CHEBI:58043"/>
        <dbReference type="ChEBI" id="CHEBI:61557"/>
        <dbReference type="EC" id="3.6.1.9"/>
    </reaction>
</comment>
<comment type="catalytic activity">
    <reaction evidence="1">
        <text>a 2'-deoxyribonucleoside 5'-triphosphate + H2O = a 2'-deoxyribonucleoside 5'-phosphate + diphosphate + H(+)</text>
        <dbReference type="Rhea" id="RHEA:44644"/>
        <dbReference type="ChEBI" id="CHEBI:15377"/>
        <dbReference type="ChEBI" id="CHEBI:15378"/>
        <dbReference type="ChEBI" id="CHEBI:33019"/>
        <dbReference type="ChEBI" id="CHEBI:61560"/>
        <dbReference type="ChEBI" id="CHEBI:65317"/>
        <dbReference type="EC" id="3.6.1.9"/>
    </reaction>
</comment>
<comment type="cofactor">
    <cofactor evidence="1">
        <name>a divalent metal cation</name>
        <dbReference type="ChEBI" id="CHEBI:60240"/>
    </cofactor>
</comment>
<comment type="subcellular location">
    <subcellularLocation>
        <location evidence="1">Cytoplasm</location>
    </subcellularLocation>
</comment>
<comment type="similarity">
    <text evidence="1">Belongs to the Maf family.</text>
</comment>
<keyword id="KW-0963">Cytoplasm</keyword>
<keyword id="KW-0378">Hydrolase</keyword>
<keyword id="KW-0546">Nucleotide metabolism</keyword>
<organism>
    <name type="scientific">Helicobacter pylori (strain Shi470)</name>
    <dbReference type="NCBI Taxonomy" id="512562"/>
    <lineage>
        <taxon>Bacteria</taxon>
        <taxon>Pseudomonadati</taxon>
        <taxon>Campylobacterota</taxon>
        <taxon>Epsilonproteobacteria</taxon>
        <taxon>Campylobacterales</taxon>
        <taxon>Helicobacteraceae</taxon>
        <taxon>Helicobacter</taxon>
    </lineage>
</organism>
<feature type="chain" id="PRO_1000127789" description="Nucleoside triphosphate pyrophosphatase">
    <location>
        <begin position="1"/>
        <end position="190"/>
    </location>
</feature>
<feature type="active site" description="Proton acceptor" evidence="1">
    <location>
        <position position="69"/>
    </location>
</feature>
<reference key="1">
    <citation type="submission" date="2008-05" db="EMBL/GenBank/DDBJ databases">
        <title>Genome sequence of Helicobacter pylori from the remote Amazon: traces of Asian ancestry of the first Americans.</title>
        <authorList>
            <person name="Kersulyte D."/>
            <person name="Kalia A."/>
            <person name="Gilman R.H."/>
            <person name="Berg D.E."/>
        </authorList>
    </citation>
    <scope>NUCLEOTIDE SEQUENCE [LARGE SCALE GENOMIC DNA]</scope>
    <source>
        <strain>Shi470</strain>
    </source>
</reference>
<proteinExistence type="inferred from homology"/>
<dbReference type="EC" id="3.6.1.9" evidence="1"/>
<dbReference type="EMBL" id="CP001072">
    <property type="protein sequence ID" value="ACD48685.1"/>
    <property type="molecule type" value="Genomic_DNA"/>
</dbReference>
<dbReference type="RefSeq" id="WP_000420229.1">
    <property type="nucleotide sequence ID" value="NC_010698.2"/>
</dbReference>
<dbReference type="SMR" id="B2UV03"/>
<dbReference type="KEGG" id="hps:HPSH_06415"/>
<dbReference type="HOGENOM" id="CLU_040416_2_2_7"/>
<dbReference type="GO" id="GO:0005737">
    <property type="term" value="C:cytoplasm"/>
    <property type="evidence" value="ECO:0007669"/>
    <property type="project" value="UniProtKB-SubCell"/>
</dbReference>
<dbReference type="GO" id="GO:0047429">
    <property type="term" value="F:nucleoside triphosphate diphosphatase activity"/>
    <property type="evidence" value="ECO:0007669"/>
    <property type="project" value="UniProtKB-EC"/>
</dbReference>
<dbReference type="GO" id="GO:0009117">
    <property type="term" value="P:nucleotide metabolic process"/>
    <property type="evidence" value="ECO:0007669"/>
    <property type="project" value="UniProtKB-KW"/>
</dbReference>
<dbReference type="FunFam" id="3.90.950.10:FF:000013">
    <property type="entry name" value="Nucleoside triphosphate pyrophosphatase"/>
    <property type="match status" value="1"/>
</dbReference>
<dbReference type="Gene3D" id="3.90.950.10">
    <property type="match status" value="1"/>
</dbReference>
<dbReference type="HAMAP" id="MF_00528">
    <property type="entry name" value="Maf"/>
    <property type="match status" value="1"/>
</dbReference>
<dbReference type="InterPro" id="IPR029001">
    <property type="entry name" value="ITPase-like_fam"/>
</dbReference>
<dbReference type="InterPro" id="IPR003697">
    <property type="entry name" value="Maf-like"/>
</dbReference>
<dbReference type="NCBIfam" id="TIGR00172">
    <property type="entry name" value="maf"/>
    <property type="match status" value="1"/>
</dbReference>
<dbReference type="NCBIfam" id="NF003141">
    <property type="entry name" value="PRK04056.1"/>
    <property type="match status" value="1"/>
</dbReference>
<dbReference type="PANTHER" id="PTHR43213">
    <property type="entry name" value="BIFUNCTIONAL DTTP/UTP PYROPHOSPHATASE/METHYLTRANSFERASE PROTEIN-RELATED"/>
    <property type="match status" value="1"/>
</dbReference>
<dbReference type="PANTHER" id="PTHR43213:SF5">
    <property type="entry name" value="BIFUNCTIONAL DTTP_UTP PYROPHOSPHATASE_METHYLTRANSFERASE PROTEIN-RELATED"/>
    <property type="match status" value="1"/>
</dbReference>
<dbReference type="Pfam" id="PF02545">
    <property type="entry name" value="Maf"/>
    <property type="match status" value="1"/>
</dbReference>
<dbReference type="PIRSF" id="PIRSF006305">
    <property type="entry name" value="Maf"/>
    <property type="match status" value="1"/>
</dbReference>
<dbReference type="SUPFAM" id="SSF52972">
    <property type="entry name" value="ITPase-like"/>
    <property type="match status" value="1"/>
</dbReference>
<name>NTPP_HELPS</name>